<proteinExistence type="inferred from homology"/>
<keyword id="KW-0963">Cytoplasm</keyword>
<keyword id="KW-0671">Queuosine biosynthesis</keyword>
<keyword id="KW-1185">Reference proteome</keyword>
<keyword id="KW-0949">S-adenosyl-L-methionine</keyword>
<keyword id="KW-0808">Transferase</keyword>
<feature type="chain" id="PRO_1000015175" description="S-adenosylmethionine:tRNA ribosyltransferase-isomerase">
    <location>
        <begin position="1"/>
        <end position="345"/>
    </location>
</feature>
<reference key="1">
    <citation type="submission" date="2006-01" db="EMBL/GenBank/DDBJ databases">
        <title>Complete sequence of Anaeromyxobacter dehalogenans 2CP-C.</title>
        <authorList>
            <person name="Copeland A."/>
            <person name="Lucas S."/>
            <person name="Lapidus A."/>
            <person name="Barry K."/>
            <person name="Detter J.C."/>
            <person name="Glavina T."/>
            <person name="Hammon N."/>
            <person name="Israni S."/>
            <person name="Pitluck S."/>
            <person name="Brettin T."/>
            <person name="Bruce D."/>
            <person name="Han C."/>
            <person name="Tapia R."/>
            <person name="Gilna P."/>
            <person name="Kiss H."/>
            <person name="Schmutz J."/>
            <person name="Larimer F."/>
            <person name="Land M."/>
            <person name="Kyrpides N."/>
            <person name="Anderson I."/>
            <person name="Sanford R.A."/>
            <person name="Ritalahti K.M."/>
            <person name="Thomas H.S."/>
            <person name="Kirby J.R."/>
            <person name="Zhulin I.B."/>
            <person name="Loeffler F.E."/>
            <person name="Richardson P."/>
        </authorList>
    </citation>
    <scope>NUCLEOTIDE SEQUENCE [LARGE SCALE GENOMIC DNA]</scope>
    <source>
        <strain>2CP-C</strain>
    </source>
</reference>
<gene>
    <name evidence="1" type="primary">queA</name>
    <name type="ordered locus">Adeh_2544</name>
</gene>
<dbReference type="EC" id="2.4.99.17" evidence="1"/>
<dbReference type="EMBL" id="CP000251">
    <property type="protein sequence ID" value="ABC82314.1"/>
    <property type="molecule type" value="Genomic_DNA"/>
</dbReference>
<dbReference type="RefSeq" id="WP_011421596.1">
    <property type="nucleotide sequence ID" value="NC_007760.1"/>
</dbReference>
<dbReference type="SMR" id="Q2IKY3"/>
<dbReference type="STRING" id="290397.Adeh_2544"/>
<dbReference type="KEGG" id="ade:Adeh_2544"/>
<dbReference type="eggNOG" id="COG0809">
    <property type="taxonomic scope" value="Bacteria"/>
</dbReference>
<dbReference type="HOGENOM" id="CLU_039110_1_0_7"/>
<dbReference type="OrthoDB" id="9805933at2"/>
<dbReference type="UniPathway" id="UPA00392"/>
<dbReference type="Proteomes" id="UP000001935">
    <property type="component" value="Chromosome"/>
</dbReference>
<dbReference type="GO" id="GO:0005737">
    <property type="term" value="C:cytoplasm"/>
    <property type="evidence" value="ECO:0007669"/>
    <property type="project" value="UniProtKB-SubCell"/>
</dbReference>
<dbReference type="GO" id="GO:0051075">
    <property type="term" value="F:S-adenosylmethionine:tRNA ribosyltransferase-isomerase activity"/>
    <property type="evidence" value="ECO:0007669"/>
    <property type="project" value="UniProtKB-EC"/>
</dbReference>
<dbReference type="GO" id="GO:0008616">
    <property type="term" value="P:queuosine biosynthetic process"/>
    <property type="evidence" value="ECO:0007669"/>
    <property type="project" value="UniProtKB-UniRule"/>
</dbReference>
<dbReference type="GO" id="GO:0002099">
    <property type="term" value="P:tRNA wobble guanine modification"/>
    <property type="evidence" value="ECO:0007669"/>
    <property type="project" value="TreeGrafter"/>
</dbReference>
<dbReference type="Gene3D" id="2.40.10.240">
    <property type="entry name" value="QueA-like"/>
    <property type="match status" value="1"/>
</dbReference>
<dbReference type="Gene3D" id="3.40.1780.10">
    <property type="entry name" value="QueA-like"/>
    <property type="match status" value="1"/>
</dbReference>
<dbReference type="HAMAP" id="MF_00113">
    <property type="entry name" value="QueA"/>
    <property type="match status" value="1"/>
</dbReference>
<dbReference type="InterPro" id="IPR003699">
    <property type="entry name" value="QueA"/>
</dbReference>
<dbReference type="InterPro" id="IPR042118">
    <property type="entry name" value="QueA_dom1"/>
</dbReference>
<dbReference type="InterPro" id="IPR042119">
    <property type="entry name" value="QueA_dom2"/>
</dbReference>
<dbReference type="InterPro" id="IPR036100">
    <property type="entry name" value="QueA_sf"/>
</dbReference>
<dbReference type="NCBIfam" id="NF001140">
    <property type="entry name" value="PRK00147.1"/>
    <property type="match status" value="1"/>
</dbReference>
<dbReference type="NCBIfam" id="TIGR00113">
    <property type="entry name" value="queA"/>
    <property type="match status" value="1"/>
</dbReference>
<dbReference type="PANTHER" id="PTHR30307">
    <property type="entry name" value="S-ADENOSYLMETHIONINE:TRNA RIBOSYLTRANSFERASE-ISOMERASE"/>
    <property type="match status" value="1"/>
</dbReference>
<dbReference type="PANTHER" id="PTHR30307:SF0">
    <property type="entry name" value="S-ADENOSYLMETHIONINE:TRNA RIBOSYLTRANSFERASE-ISOMERASE"/>
    <property type="match status" value="1"/>
</dbReference>
<dbReference type="Pfam" id="PF02547">
    <property type="entry name" value="Queuosine_synth"/>
    <property type="match status" value="1"/>
</dbReference>
<dbReference type="SUPFAM" id="SSF111337">
    <property type="entry name" value="QueA-like"/>
    <property type="match status" value="1"/>
</dbReference>
<organism>
    <name type="scientific">Anaeromyxobacter dehalogenans (strain 2CP-C)</name>
    <dbReference type="NCBI Taxonomy" id="290397"/>
    <lineage>
        <taxon>Bacteria</taxon>
        <taxon>Pseudomonadati</taxon>
        <taxon>Myxococcota</taxon>
        <taxon>Myxococcia</taxon>
        <taxon>Myxococcales</taxon>
        <taxon>Cystobacterineae</taxon>
        <taxon>Anaeromyxobacteraceae</taxon>
        <taxon>Anaeromyxobacter</taxon>
    </lineage>
</organism>
<comment type="function">
    <text evidence="1">Transfers and isomerizes the ribose moiety from AdoMet to the 7-aminomethyl group of 7-deazaguanine (preQ1-tRNA) to give epoxyqueuosine (oQ-tRNA).</text>
</comment>
<comment type="catalytic activity">
    <reaction evidence="1">
        <text>7-aminomethyl-7-carbaguanosine(34) in tRNA + S-adenosyl-L-methionine = epoxyqueuosine(34) in tRNA + adenine + L-methionine + 2 H(+)</text>
        <dbReference type="Rhea" id="RHEA:32155"/>
        <dbReference type="Rhea" id="RHEA-COMP:10342"/>
        <dbReference type="Rhea" id="RHEA-COMP:18582"/>
        <dbReference type="ChEBI" id="CHEBI:15378"/>
        <dbReference type="ChEBI" id="CHEBI:16708"/>
        <dbReference type="ChEBI" id="CHEBI:57844"/>
        <dbReference type="ChEBI" id="CHEBI:59789"/>
        <dbReference type="ChEBI" id="CHEBI:82833"/>
        <dbReference type="ChEBI" id="CHEBI:194443"/>
        <dbReference type="EC" id="2.4.99.17"/>
    </reaction>
</comment>
<comment type="pathway">
    <text evidence="1">tRNA modification; tRNA-queuosine biosynthesis.</text>
</comment>
<comment type="subunit">
    <text evidence="1">Monomer.</text>
</comment>
<comment type="subcellular location">
    <subcellularLocation>
        <location evidence="1">Cytoplasm</location>
    </subcellularLocation>
</comment>
<comment type="similarity">
    <text evidence="1">Belongs to the QueA family.</text>
</comment>
<name>QUEA_ANADE</name>
<sequence>MRLSDFDFALPEGLVAQAPVTPRDASRLMVLAPGEGAPAHRGFADLPELLAPGDLLVFNDTRVIPARLLGHKASGGKVELLLCEPLEGGLGRRWRAMGQASKPIREGAVLAFDGLEARVDAVEGEGFYRVTLDRQGAELEAALGRAGRIPLPPYIRRAPDAEDAARYQTIWARAPGSAAAPTAGLHFTEPLLARLAARGVRRTAVTLHVGPGTFLPIRGDDLDAHRMHGERYEVSPAAAAELAAARARGGRIVAVGTTSVRTLESAWRDGEVAPGPGRTELFIRPGHPFRAVDAMVTNFHLPRSTLLVLVCAFGGQGRVLAAYREAVARGYRFFSYGDAMLLLRR</sequence>
<evidence type="ECO:0000255" key="1">
    <source>
        <dbReference type="HAMAP-Rule" id="MF_00113"/>
    </source>
</evidence>
<accession>Q2IKY3</accession>
<protein>
    <recommendedName>
        <fullName evidence="1">S-adenosylmethionine:tRNA ribosyltransferase-isomerase</fullName>
        <ecNumber evidence="1">2.4.99.17</ecNumber>
    </recommendedName>
    <alternativeName>
        <fullName evidence="1">Queuosine biosynthesis protein QueA</fullName>
    </alternativeName>
</protein>